<comment type="function">
    <text evidence="1">Catalyzes the ATP-dependent transfer of a sulfur to tRNA to produce 4-thiouridine in position 8 of tRNAs, which functions as a near-UV photosensor. Also catalyzes the transfer of sulfur to the sulfur carrier protein ThiS, forming ThiS-thiocarboxylate. This is a step in the synthesis of thiazole, in the thiamine biosynthesis pathway. The sulfur is donated as persulfide by IscS.</text>
</comment>
<comment type="catalytic activity">
    <reaction evidence="1">
        <text>[ThiI sulfur-carrier protein]-S-sulfanyl-L-cysteine + a uridine in tRNA + 2 reduced [2Fe-2S]-[ferredoxin] + ATP + H(+) = [ThiI sulfur-carrier protein]-L-cysteine + a 4-thiouridine in tRNA + 2 oxidized [2Fe-2S]-[ferredoxin] + AMP + diphosphate</text>
        <dbReference type="Rhea" id="RHEA:24176"/>
        <dbReference type="Rhea" id="RHEA-COMP:10000"/>
        <dbReference type="Rhea" id="RHEA-COMP:10001"/>
        <dbReference type="Rhea" id="RHEA-COMP:13337"/>
        <dbReference type="Rhea" id="RHEA-COMP:13338"/>
        <dbReference type="Rhea" id="RHEA-COMP:13339"/>
        <dbReference type="Rhea" id="RHEA-COMP:13340"/>
        <dbReference type="ChEBI" id="CHEBI:15378"/>
        <dbReference type="ChEBI" id="CHEBI:29950"/>
        <dbReference type="ChEBI" id="CHEBI:30616"/>
        <dbReference type="ChEBI" id="CHEBI:33019"/>
        <dbReference type="ChEBI" id="CHEBI:33737"/>
        <dbReference type="ChEBI" id="CHEBI:33738"/>
        <dbReference type="ChEBI" id="CHEBI:61963"/>
        <dbReference type="ChEBI" id="CHEBI:65315"/>
        <dbReference type="ChEBI" id="CHEBI:136798"/>
        <dbReference type="ChEBI" id="CHEBI:456215"/>
        <dbReference type="EC" id="2.8.1.4"/>
    </reaction>
</comment>
<comment type="catalytic activity">
    <reaction evidence="1">
        <text>[ThiS sulfur-carrier protein]-C-terminal Gly-Gly-AMP + S-sulfanyl-L-cysteinyl-[cysteine desulfurase] + AH2 = [ThiS sulfur-carrier protein]-C-terminal-Gly-aminoethanethioate + L-cysteinyl-[cysteine desulfurase] + A + AMP + 2 H(+)</text>
        <dbReference type="Rhea" id="RHEA:43340"/>
        <dbReference type="Rhea" id="RHEA-COMP:12157"/>
        <dbReference type="Rhea" id="RHEA-COMP:12158"/>
        <dbReference type="Rhea" id="RHEA-COMP:12910"/>
        <dbReference type="Rhea" id="RHEA-COMP:19908"/>
        <dbReference type="ChEBI" id="CHEBI:13193"/>
        <dbReference type="ChEBI" id="CHEBI:15378"/>
        <dbReference type="ChEBI" id="CHEBI:17499"/>
        <dbReference type="ChEBI" id="CHEBI:29950"/>
        <dbReference type="ChEBI" id="CHEBI:61963"/>
        <dbReference type="ChEBI" id="CHEBI:90618"/>
        <dbReference type="ChEBI" id="CHEBI:232372"/>
        <dbReference type="ChEBI" id="CHEBI:456215"/>
    </reaction>
</comment>
<comment type="pathway">
    <text evidence="1">Cofactor biosynthesis; thiamine diphosphate biosynthesis.</text>
</comment>
<comment type="subcellular location">
    <subcellularLocation>
        <location evidence="1">Cytoplasm</location>
    </subcellularLocation>
</comment>
<comment type="similarity">
    <text evidence="1">Belongs to the ThiI family.</text>
</comment>
<keyword id="KW-0067">ATP-binding</keyword>
<keyword id="KW-0963">Cytoplasm</keyword>
<keyword id="KW-0547">Nucleotide-binding</keyword>
<keyword id="KW-0694">RNA-binding</keyword>
<keyword id="KW-0784">Thiamine biosynthesis</keyword>
<keyword id="KW-0808">Transferase</keyword>
<keyword id="KW-0820">tRNA-binding</keyword>
<reference key="1">
    <citation type="journal article" date="2008" name="J. Bacteriol.">
        <title>Genome sequence of Staphylococcus aureus strain Newman and comparative analysis of staphylococcal genomes: polymorphism and evolution of two major pathogenicity islands.</title>
        <authorList>
            <person name="Baba T."/>
            <person name="Bae T."/>
            <person name="Schneewind O."/>
            <person name="Takeuchi F."/>
            <person name="Hiramatsu K."/>
        </authorList>
    </citation>
    <scope>NUCLEOTIDE SEQUENCE [LARGE SCALE GENOMIC DNA]</scope>
    <source>
        <strain>Newman</strain>
    </source>
</reference>
<dbReference type="EC" id="2.8.1.4" evidence="1"/>
<dbReference type="EMBL" id="AP009351">
    <property type="protein sequence ID" value="BAF67881.1"/>
    <property type="molecule type" value="Genomic_DNA"/>
</dbReference>
<dbReference type="RefSeq" id="WP_000872653.1">
    <property type="nucleotide sequence ID" value="NZ_JBBIAE010000009.1"/>
</dbReference>
<dbReference type="SMR" id="A6QHP9"/>
<dbReference type="KEGG" id="sae:NWMN_1609"/>
<dbReference type="HOGENOM" id="CLU_037952_4_0_9"/>
<dbReference type="UniPathway" id="UPA00060"/>
<dbReference type="Proteomes" id="UP000006386">
    <property type="component" value="Chromosome"/>
</dbReference>
<dbReference type="GO" id="GO:0005829">
    <property type="term" value="C:cytosol"/>
    <property type="evidence" value="ECO:0007669"/>
    <property type="project" value="TreeGrafter"/>
</dbReference>
<dbReference type="GO" id="GO:0005524">
    <property type="term" value="F:ATP binding"/>
    <property type="evidence" value="ECO:0007669"/>
    <property type="project" value="UniProtKB-UniRule"/>
</dbReference>
<dbReference type="GO" id="GO:0004810">
    <property type="term" value="F:CCA tRNA nucleotidyltransferase activity"/>
    <property type="evidence" value="ECO:0007669"/>
    <property type="project" value="InterPro"/>
</dbReference>
<dbReference type="GO" id="GO:0000049">
    <property type="term" value="F:tRNA binding"/>
    <property type="evidence" value="ECO:0007669"/>
    <property type="project" value="UniProtKB-UniRule"/>
</dbReference>
<dbReference type="GO" id="GO:0140741">
    <property type="term" value="F:tRNA-uracil-4 sulfurtransferase activity"/>
    <property type="evidence" value="ECO:0007669"/>
    <property type="project" value="UniProtKB-EC"/>
</dbReference>
<dbReference type="GO" id="GO:0009228">
    <property type="term" value="P:thiamine biosynthetic process"/>
    <property type="evidence" value="ECO:0007669"/>
    <property type="project" value="UniProtKB-KW"/>
</dbReference>
<dbReference type="GO" id="GO:0009229">
    <property type="term" value="P:thiamine diphosphate biosynthetic process"/>
    <property type="evidence" value="ECO:0007669"/>
    <property type="project" value="UniProtKB-UniRule"/>
</dbReference>
<dbReference type="GO" id="GO:0052837">
    <property type="term" value="P:thiazole biosynthetic process"/>
    <property type="evidence" value="ECO:0007669"/>
    <property type="project" value="TreeGrafter"/>
</dbReference>
<dbReference type="GO" id="GO:0002937">
    <property type="term" value="P:tRNA 4-thiouridine biosynthesis"/>
    <property type="evidence" value="ECO:0007669"/>
    <property type="project" value="TreeGrafter"/>
</dbReference>
<dbReference type="CDD" id="cd01712">
    <property type="entry name" value="PPase_ThiI"/>
    <property type="match status" value="1"/>
</dbReference>
<dbReference type="CDD" id="cd11716">
    <property type="entry name" value="THUMP_ThiI"/>
    <property type="match status" value="1"/>
</dbReference>
<dbReference type="FunFam" id="3.30.2130.30:FF:000009">
    <property type="entry name" value="Probable tRNA sulfurtransferase"/>
    <property type="match status" value="1"/>
</dbReference>
<dbReference type="FunFam" id="3.40.50.620:FF:000053">
    <property type="entry name" value="Probable tRNA sulfurtransferase"/>
    <property type="match status" value="1"/>
</dbReference>
<dbReference type="Gene3D" id="3.30.2130.30">
    <property type="match status" value="1"/>
</dbReference>
<dbReference type="Gene3D" id="3.40.50.620">
    <property type="entry name" value="HUPs"/>
    <property type="match status" value="1"/>
</dbReference>
<dbReference type="HAMAP" id="MF_00021">
    <property type="entry name" value="ThiI"/>
    <property type="match status" value="1"/>
</dbReference>
<dbReference type="InterPro" id="IPR014729">
    <property type="entry name" value="Rossmann-like_a/b/a_fold"/>
</dbReference>
<dbReference type="InterPro" id="IPR020536">
    <property type="entry name" value="ThiI_AANH"/>
</dbReference>
<dbReference type="InterPro" id="IPR054173">
    <property type="entry name" value="ThiI_fer"/>
</dbReference>
<dbReference type="InterPro" id="IPR049961">
    <property type="entry name" value="ThiI_N"/>
</dbReference>
<dbReference type="InterPro" id="IPR004114">
    <property type="entry name" value="THUMP_dom"/>
</dbReference>
<dbReference type="InterPro" id="IPR049962">
    <property type="entry name" value="THUMP_ThiI"/>
</dbReference>
<dbReference type="InterPro" id="IPR003720">
    <property type="entry name" value="tRNA_STrfase"/>
</dbReference>
<dbReference type="InterPro" id="IPR050102">
    <property type="entry name" value="tRNA_sulfurtransferase_ThiI"/>
</dbReference>
<dbReference type="NCBIfam" id="TIGR00342">
    <property type="entry name" value="tRNA uracil 4-sulfurtransferase ThiI"/>
    <property type="match status" value="1"/>
</dbReference>
<dbReference type="PANTHER" id="PTHR43209">
    <property type="entry name" value="TRNA SULFURTRANSFERASE"/>
    <property type="match status" value="1"/>
</dbReference>
<dbReference type="PANTHER" id="PTHR43209:SF1">
    <property type="entry name" value="TRNA SULFURTRANSFERASE"/>
    <property type="match status" value="1"/>
</dbReference>
<dbReference type="Pfam" id="PF02568">
    <property type="entry name" value="ThiI"/>
    <property type="match status" value="1"/>
</dbReference>
<dbReference type="Pfam" id="PF22025">
    <property type="entry name" value="ThiI_fer"/>
    <property type="match status" value="1"/>
</dbReference>
<dbReference type="Pfam" id="PF02926">
    <property type="entry name" value="THUMP"/>
    <property type="match status" value="1"/>
</dbReference>
<dbReference type="SMART" id="SM00981">
    <property type="entry name" value="THUMP"/>
    <property type="match status" value="1"/>
</dbReference>
<dbReference type="SUPFAM" id="SSF52402">
    <property type="entry name" value="Adenine nucleotide alpha hydrolases-like"/>
    <property type="match status" value="1"/>
</dbReference>
<dbReference type="SUPFAM" id="SSF143437">
    <property type="entry name" value="THUMP domain-like"/>
    <property type="match status" value="1"/>
</dbReference>
<dbReference type="PROSITE" id="PS51165">
    <property type="entry name" value="THUMP"/>
    <property type="match status" value="1"/>
</dbReference>
<gene>
    <name evidence="1" type="primary">thiI</name>
    <name type="ordered locus">NWMN_1609</name>
</gene>
<sequence>MKYDHLLVRYGELTLKGSNRKKFVNQLRNNVNKSLKGLDGFVVKGKRDRMYIELEDHADINEITYRLSKIFGIKSISPVLKVEKTIEAISAAAIKFAQQFEENSTFKIDVKRADKNFPMDTYELQRELGGAVLKHFDNISVNVKRPDHEIRVEVRLDAIYMYEEVVPGSGGLPVGTGGKTLLMLSGGIDSPVAGMEVMRRGVTIEAIHFHSPPFTSDQAKEKVIELTRILAERVGPIKLHIVPFTELQKQVNKVVHPRYTMTSTRRMMMRVADKLVHQIGALAIVNGENLGQVASQTLHSMYAINNVTSTPVLRPLLTYDKEEIIIKSKEIGTFETSIQPFEDCCTIFTPKNPVTEPNFDKVVQYESVFDFEEMINRAVENIETLEITSDYKTIKEQQTNQLINDFL</sequence>
<name>THII_STAAE</name>
<protein>
    <recommendedName>
        <fullName evidence="1">Probable tRNA sulfurtransferase</fullName>
        <ecNumber evidence="1">2.8.1.4</ecNumber>
    </recommendedName>
    <alternativeName>
        <fullName evidence="1">Sulfur carrier protein ThiS sulfurtransferase</fullName>
    </alternativeName>
    <alternativeName>
        <fullName evidence="1">Thiamine biosynthesis protein ThiI</fullName>
    </alternativeName>
    <alternativeName>
        <fullName evidence="1">tRNA 4-thiouridine synthase</fullName>
    </alternativeName>
</protein>
<proteinExistence type="inferred from homology"/>
<accession>A6QHP9</accession>
<evidence type="ECO:0000255" key="1">
    <source>
        <dbReference type="HAMAP-Rule" id="MF_00021"/>
    </source>
</evidence>
<organism>
    <name type="scientific">Staphylococcus aureus (strain Newman)</name>
    <dbReference type="NCBI Taxonomy" id="426430"/>
    <lineage>
        <taxon>Bacteria</taxon>
        <taxon>Bacillati</taxon>
        <taxon>Bacillota</taxon>
        <taxon>Bacilli</taxon>
        <taxon>Bacillales</taxon>
        <taxon>Staphylococcaceae</taxon>
        <taxon>Staphylococcus</taxon>
    </lineage>
</organism>
<feature type="chain" id="PRO_1000074288" description="Probable tRNA sulfurtransferase">
    <location>
        <begin position="1"/>
        <end position="407"/>
    </location>
</feature>
<feature type="domain" description="THUMP" evidence="1">
    <location>
        <begin position="61"/>
        <end position="165"/>
    </location>
</feature>
<feature type="binding site" evidence="1">
    <location>
        <begin position="183"/>
        <end position="184"/>
    </location>
    <ligand>
        <name>ATP</name>
        <dbReference type="ChEBI" id="CHEBI:30616"/>
    </ligand>
</feature>
<feature type="binding site" evidence="1">
    <location>
        <begin position="208"/>
        <end position="209"/>
    </location>
    <ligand>
        <name>ATP</name>
        <dbReference type="ChEBI" id="CHEBI:30616"/>
    </ligand>
</feature>
<feature type="binding site" evidence="1">
    <location>
        <position position="265"/>
    </location>
    <ligand>
        <name>ATP</name>
        <dbReference type="ChEBI" id="CHEBI:30616"/>
    </ligand>
</feature>
<feature type="binding site" evidence="1">
    <location>
        <position position="287"/>
    </location>
    <ligand>
        <name>ATP</name>
        <dbReference type="ChEBI" id="CHEBI:30616"/>
    </ligand>
</feature>
<feature type="binding site" evidence="1">
    <location>
        <position position="296"/>
    </location>
    <ligand>
        <name>ATP</name>
        <dbReference type="ChEBI" id="CHEBI:30616"/>
    </ligand>
</feature>